<proteinExistence type="evidence at transcript level"/>
<evidence type="ECO:0000250" key="1"/>
<evidence type="ECO:0000255" key="2">
    <source>
        <dbReference type="PROSITE-ProRule" id="PRU00042"/>
    </source>
</evidence>
<evidence type="ECO:0000256" key="3">
    <source>
        <dbReference type="SAM" id="MobiDB-lite"/>
    </source>
</evidence>
<evidence type="ECO:0000269" key="4">
    <source>
    </source>
</evidence>
<evidence type="ECO:0000269" key="5">
    <source>
    </source>
</evidence>
<evidence type="ECO:0000269" key="6">
    <source>
    </source>
</evidence>
<evidence type="ECO:0000269" key="7">
    <source>
    </source>
</evidence>
<reference key="1">
    <citation type="journal article" date="2004" name="Proc. Natl. Acad. Sci. U.S.A.">
        <title>The diploid genome sequence of Candida albicans.</title>
        <authorList>
            <person name="Jones T."/>
            <person name="Federspiel N.A."/>
            <person name="Chibana H."/>
            <person name="Dungan J."/>
            <person name="Kalman S."/>
            <person name="Magee B.B."/>
            <person name="Newport G."/>
            <person name="Thorstenson Y.R."/>
            <person name="Agabian N."/>
            <person name="Magee P.T."/>
            <person name="Davis R.W."/>
            <person name="Scherer S."/>
        </authorList>
    </citation>
    <scope>NUCLEOTIDE SEQUENCE [LARGE SCALE GENOMIC DNA]</scope>
    <source>
        <strain>SC5314 / ATCC MYA-2876</strain>
    </source>
</reference>
<reference key="2">
    <citation type="journal article" date="2007" name="Genome Biol.">
        <title>Assembly of the Candida albicans genome into sixteen supercontigs aligned on the eight chromosomes.</title>
        <authorList>
            <person name="van het Hoog M."/>
            <person name="Rast T.J."/>
            <person name="Martchenko M."/>
            <person name="Grindle S."/>
            <person name="Dignard D."/>
            <person name="Hogues H."/>
            <person name="Cuomo C."/>
            <person name="Berriman M."/>
            <person name="Scherer S."/>
            <person name="Magee B.B."/>
            <person name="Whiteway M."/>
            <person name="Chibana H."/>
            <person name="Nantel A."/>
            <person name="Magee P.T."/>
        </authorList>
    </citation>
    <scope>GENOME REANNOTATION</scope>
    <source>
        <strain>SC5314 / ATCC MYA-2876</strain>
    </source>
</reference>
<reference key="3">
    <citation type="journal article" date="2013" name="Genome Biol.">
        <title>Assembly of a phased diploid Candida albicans genome facilitates allele-specific measurements and provides a simple model for repeat and indel structure.</title>
        <authorList>
            <person name="Muzzey D."/>
            <person name="Schwartz K."/>
            <person name="Weissman J.S."/>
            <person name="Sherlock G."/>
        </authorList>
    </citation>
    <scope>NUCLEOTIDE SEQUENCE [LARGE SCALE GENOMIC DNA]</scope>
    <scope>GENOME REANNOTATION</scope>
    <source>
        <strain>SC5314 / ATCC MYA-2876</strain>
    </source>
</reference>
<reference key="4">
    <citation type="journal article" date="2005" name="Mol. Biol. Cell">
        <title>Global roles of Ssn6 in Tup1- and Nrg1-dependent gene regulation in the fungal pathogen, Candida albicans.</title>
        <authorList>
            <person name="Garcia-Sanchez S."/>
            <person name="Mavor A.L."/>
            <person name="Russell C.L."/>
            <person name="Argimon S."/>
            <person name="Dennison P."/>
            <person name="Enjalbert B."/>
            <person name="Brown A.J."/>
        </authorList>
    </citation>
    <scope>INDUCTION</scope>
</reference>
<reference key="5">
    <citation type="journal article" date="2006" name="Eukaryot. Cell">
        <title>Cellular and molecular biology of Candida albicans estrogen response.</title>
        <authorList>
            <person name="Cheng G."/>
            <person name="Yeater K.M."/>
            <person name="Hoyer L.L."/>
        </authorList>
    </citation>
    <scope>INDUCTION</scope>
</reference>
<reference key="6">
    <citation type="journal article" date="2006" name="PLoS Pathog.">
        <title>Control of the C. albicans cell wall damage response by transcriptional regulator Cas5.</title>
        <authorList>
            <person name="Bruno V.M."/>
            <person name="Kalachikov S."/>
            <person name="Subaran R."/>
            <person name="Nobile C.J."/>
            <person name="Kyratsous C."/>
            <person name="Mitchell A.P."/>
        </authorList>
    </citation>
    <scope>INDUCTION</scope>
    <scope>FUNCTION</scope>
</reference>
<reference key="7">
    <citation type="journal article" date="2012" name="Cell">
        <title>A recently evolved transcriptional network controls biofilm development in Candida albicans.</title>
        <authorList>
            <person name="Nobile C.J."/>
            <person name="Fox E.P."/>
            <person name="Nett J.E."/>
            <person name="Sorrells T.R."/>
            <person name="Mitrovich Q.M."/>
            <person name="Hernday A.D."/>
            <person name="Tuch B.B."/>
            <person name="Andes D.R."/>
            <person name="Johnson A.D."/>
        </authorList>
    </citation>
    <scope>INDUCTION</scope>
</reference>
<feature type="chain" id="PRO_0000426060" description="Transcriptional regulator STP4">
    <location>
        <begin position="1"/>
        <end position="376"/>
    </location>
</feature>
<feature type="zinc finger region" description="C2H2-type" evidence="2">
    <location>
        <begin position="241"/>
        <end position="263"/>
    </location>
</feature>
<feature type="region of interest" description="Disordered" evidence="3">
    <location>
        <begin position="25"/>
        <end position="58"/>
    </location>
</feature>
<feature type="region of interest" description="Disordered" evidence="3">
    <location>
        <begin position="89"/>
        <end position="122"/>
    </location>
</feature>
<feature type="region of interest" description="Disordered" evidence="3">
    <location>
        <begin position="137"/>
        <end position="210"/>
    </location>
</feature>
<feature type="compositionally biased region" description="Low complexity" evidence="3">
    <location>
        <begin position="32"/>
        <end position="50"/>
    </location>
</feature>
<feature type="compositionally biased region" description="Low complexity" evidence="3">
    <location>
        <begin position="89"/>
        <end position="103"/>
    </location>
</feature>
<feature type="compositionally biased region" description="Polar residues" evidence="3">
    <location>
        <begin position="146"/>
        <end position="183"/>
    </location>
</feature>
<feature type="compositionally biased region" description="Polar residues" evidence="3">
    <location>
        <begin position="191"/>
        <end position="200"/>
    </location>
</feature>
<sequence length="376" mass="42414">MLSMAVTPSNTLTSQYPTKQENYNQNYCSIKSPSPTSTPTSTSLTMTSPPQLHNPHASITLPSIHSLDIPAFPHYEQEYSRASVFQNYSSNSPTPSNSSYSPTLLIPSNDRPASSSVYSNSSSTLLLSPGMSTTPNVNCIAPVSRPRSTSNLTENSEQSFTSQQSHPAISSNATITSPQLSVKSENEQLHEPQNSNTIISPRQNKKNWKPRKKKQCPECNLYFSNLATHKSTHLKPNNRPHICKYCERGFARPNDLFRHVKCHWKEIGSDQGQFKCPFKNIDSSKRENQEKVTGNTGVPDHCCHNTGIFSRCDTFKNHLKAIHFQYPNGTKKEQRNLVNGKCRMCQQEFRNVDDWMHNHIETNSCPYAINLIKKEH</sequence>
<name>STP4_CANAL</name>
<protein>
    <recommendedName>
        <fullName>Transcriptional regulator STP4</fullName>
    </recommendedName>
</protein>
<dbReference type="EMBL" id="CP017624">
    <property type="protein sequence ID" value="AOW27358.1"/>
    <property type="molecule type" value="Genomic_DNA"/>
</dbReference>
<dbReference type="RefSeq" id="XP_721028.2">
    <property type="nucleotide sequence ID" value="XM_715935.2"/>
</dbReference>
<dbReference type="FunCoup" id="Q5AH87">
    <property type="interactions" value="184"/>
</dbReference>
<dbReference type="STRING" id="237561.Q5AH87"/>
<dbReference type="EnsemblFungi" id="C2_03220C_A-T">
    <property type="protein sequence ID" value="C2_03220C_A-T-p1"/>
    <property type="gene ID" value="C2_03220C_A"/>
</dbReference>
<dbReference type="GeneID" id="3637405"/>
<dbReference type="KEGG" id="cal:CAALFM_C203220CA"/>
<dbReference type="CGD" id="CAL0000184778">
    <property type="gene designation" value="STP4"/>
</dbReference>
<dbReference type="VEuPathDB" id="FungiDB:C2_03220C_A"/>
<dbReference type="eggNOG" id="KOG1721">
    <property type="taxonomic scope" value="Eukaryota"/>
</dbReference>
<dbReference type="HOGENOM" id="CLU_035625_2_0_1"/>
<dbReference type="InParanoid" id="Q5AH87"/>
<dbReference type="OMA" id="FTINMIK"/>
<dbReference type="OrthoDB" id="10018191at2759"/>
<dbReference type="PRO" id="PR:Q5AH87"/>
<dbReference type="Proteomes" id="UP000000559">
    <property type="component" value="Chromosome 2"/>
</dbReference>
<dbReference type="GO" id="GO:0005634">
    <property type="term" value="C:nucleus"/>
    <property type="evidence" value="ECO:0007669"/>
    <property type="project" value="UniProtKB-SubCell"/>
</dbReference>
<dbReference type="GO" id="GO:0008270">
    <property type="term" value="F:zinc ion binding"/>
    <property type="evidence" value="ECO:0007669"/>
    <property type="project" value="UniProtKB-KW"/>
</dbReference>
<dbReference type="GO" id="GO:0030447">
    <property type="term" value="P:filamentous growth"/>
    <property type="evidence" value="ECO:0000315"/>
    <property type="project" value="CGD"/>
</dbReference>
<dbReference type="Gene3D" id="3.30.160.60">
    <property type="entry name" value="Classic Zinc Finger"/>
    <property type="match status" value="1"/>
</dbReference>
<dbReference type="InterPro" id="IPR051643">
    <property type="entry name" value="Transcr_Reg_ZincFinger"/>
</dbReference>
<dbReference type="InterPro" id="IPR036236">
    <property type="entry name" value="Znf_C2H2_sf"/>
</dbReference>
<dbReference type="InterPro" id="IPR013087">
    <property type="entry name" value="Znf_C2H2_type"/>
</dbReference>
<dbReference type="PANTHER" id="PTHR24396:SF19">
    <property type="entry name" value="FI01119P"/>
    <property type="match status" value="1"/>
</dbReference>
<dbReference type="PANTHER" id="PTHR24396">
    <property type="entry name" value="ZINC FINGER PROTEIN"/>
    <property type="match status" value="1"/>
</dbReference>
<dbReference type="SMART" id="SM00355">
    <property type="entry name" value="ZnF_C2H2"/>
    <property type="match status" value="2"/>
</dbReference>
<dbReference type="SUPFAM" id="SSF57667">
    <property type="entry name" value="beta-beta-alpha zinc fingers"/>
    <property type="match status" value="1"/>
</dbReference>
<dbReference type="PROSITE" id="PS00028">
    <property type="entry name" value="ZINC_FINGER_C2H2_1"/>
    <property type="match status" value="1"/>
</dbReference>
<dbReference type="PROSITE" id="PS50157">
    <property type="entry name" value="ZINC_FINGER_C2H2_2"/>
    <property type="match status" value="1"/>
</dbReference>
<accession>Q5AH87</accession>
<accession>A0A1D8PGT7</accession>
<keyword id="KW-0479">Metal-binding</keyword>
<keyword id="KW-0539">Nucleus</keyword>
<keyword id="KW-1185">Reference proteome</keyword>
<keyword id="KW-0804">Transcription</keyword>
<keyword id="KW-0805">Transcription regulation</keyword>
<keyword id="KW-0862">Zinc</keyword>
<keyword id="KW-0863">Zinc-finger</keyword>
<comment type="function">
    <text evidence="6">Probable transcription factor involved in response to cell wall damage.</text>
</comment>
<comment type="subcellular location">
    <subcellularLocation>
        <location evidence="1">Nucleus</location>
    </subcellularLocation>
</comment>
<comment type="induction">
    <text evidence="4 5 6 7">Induced in biofilm, by caspofugin, as well as by 17-beta-estradiol and ethynyl estradiol. Expression is regulated by SSN6.</text>
</comment>
<gene>
    <name type="primary">STP4</name>
    <name type="ordered locus">CAALFM_C203220CA</name>
    <name type="ORF">CaO19.8527</name>
    <name type="ORF">CaO19.909</name>
</gene>
<organism>
    <name type="scientific">Candida albicans (strain SC5314 / ATCC MYA-2876)</name>
    <name type="common">Yeast</name>
    <dbReference type="NCBI Taxonomy" id="237561"/>
    <lineage>
        <taxon>Eukaryota</taxon>
        <taxon>Fungi</taxon>
        <taxon>Dikarya</taxon>
        <taxon>Ascomycota</taxon>
        <taxon>Saccharomycotina</taxon>
        <taxon>Pichiomycetes</taxon>
        <taxon>Debaryomycetaceae</taxon>
        <taxon>Candida/Lodderomyces clade</taxon>
        <taxon>Candida</taxon>
    </lineage>
</organism>